<evidence type="ECO:0000255" key="1">
    <source>
        <dbReference type="HAMAP-Rule" id="MF_00057"/>
    </source>
</evidence>
<keyword id="KW-0963">Cytoplasm</keyword>
<keyword id="KW-0448">Lipopolysaccharide biosynthesis</keyword>
<keyword id="KW-0548">Nucleotidyltransferase</keyword>
<keyword id="KW-0808">Transferase</keyword>
<gene>
    <name evidence="1" type="primary">kdsB</name>
    <name type="ordered locus">PFL_1780</name>
</gene>
<protein>
    <recommendedName>
        <fullName evidence="1">3-deoxy-manno-octulosonate cytidylyltransferase</fullName>
        <ecNumber evidence="1">2.7.7.38</ecNumber>
    </recommendedName>
    <alternativeName>
        <fullName evidence="1">CMP-2-keto-3-deoxyoctulosonic acid synthase</fullName>
        <shortName evidence="1">CKS</shortName>
        <shortName evidence="1">CMP-KDO synthase</shortName>
    </alternativeName>
</protein>
<dbReference type="EC" id="2.7.7.38" evidence="1"/>
<dbReference type="EMBL" id="CP000076">
    <property type="protein sequence ID" value="AAY91069.1"/>
    <property type="molecule type" value="Genomic_DNA"/>
</dbReference>
<dbReference type="RefSeq" id="WP_011060104.1">
    <property type="nucleotide sequence ID" value="NC_004129.6"/>
</dbReference>
<dbReference type="SMR" id="Q4KFT3"/>
<dbReference type="STRING" id="220664.PFL_1780"/>
<dbReference type="GeneID" id="57474800"/>
<dbReference type="KEGG" id="pfl:PFL_1780"/>
<dbReference type="PATRIC" id="fig|220664.5.peg.1814"/>
<dbReference type="eggNOG" id="COG1212">
    <property type="taxonomic scope" value="Bacteria"/>
</dbReference>
<dbReference type="HOGENOM" id="CLU_065038_1_0_6"/>
<dbReference type="UniPathway" id="UPA00030"/>
<dbReference type="UniPathway" id="UPA00358">
    <property type="reaction ID" value="UER00476"/>
</dbReference>
<dbReference type="Proteomes" id="UP000008540">
    <property type="component" value="Chromosome"/>
</dbReference>
<dbReference type="GO" id="GO:0005829">
    <property type="term" value="C:cytosol"/>
    <property type="evidence" value="ECO:0007669"/>
    <property type="project" value="TreeGrafter"/>
</dbReference>
<dbReference type="GO" id="GO:0008690">
    <property type="term" value="F:3-deoxy-manno-octulosonate cytidylyltransferase activity"/>
    <property type="evidence" value="ECO:0007669"/>
    <property type="project" value="UniProtKB-UniRule"/>
</dbReference>
<dbReference type="GO" id="GO:0033468">
    <property type="term" value="P:CMP-keto-3-deoxy-D-manno-octulosonic acid biosynthetic process"/>
    <property type="evidence" value="ECO:0007669"/>
    <property type="project" value="UniProtKB-UniRule"/>
</dbReference>
<dbReference type="GO" id="GO:0009103">
    <property type="term" value="P:lipopolysaccharide biosynthetic process"/>
    <property type="evidence" value="ECO:0007669"/>
    <property type="project" value="UniProtKB-UniRule"/>
</dbReference>
<dbReference type="CDD" id="cd02517">
    <property type="entry name" value="CMP-KDO-Synthetase"/>
    <property type="match status" value="1"/>
</dbReference>
<dbReference type="FunFam" id="3.90.550.10:FF:000011">
    <property type="entry name" value="3-deoxy-manno-octulosonate cytidylyltransferase"/>
    <property type="match status" value="1"/>
</dbReference>
<dbReference type="Gene3D" id="3.90.550.10">
    <property type="entry name" value="Spore Coat Polysaccharide Biosynthesis Protein SpsA, Chain A"/>
    <property type="match status" value="1"/>
</dbReference>
<dbReference type="HAMAP" id="MF_00057">
    <property type="entry name" value="KdsB"/>
    <property type="match status" value="1"/>
</dbReference>
<dbReference type="InterPro" id="IPR003329">
    <property type="entry name" value="Cytidylyl_trans"/>
</dbReference>
<dbReference type="InterPro" id="IPR004528">
    <property type="entry name" value="KdsB"/>
</dbReference>
<dbReference type="InterPro" id="IPR029044">
    <property type="entry name" value="Nucleotide-diphossugar_trans"/>
</dbReference>
<dbReference type="NCBIfam" id="TIGR00466">
    <property type="entry name" value="kdsB"/>
    <property type="match status" value="1"/>
</dbReference>
<dbReference type="NCBIfam" id="NF003950">
    <property type="entry name" value="PRK05450.1-3"/>
    <property type="match status" value="1"/>
</dbReference>
<dbReference type="NCBIfam" id="NF003952">
    <property type="entry name" value="PRK05450.1-5"/>
    <property type="match status" value="1"/>
</dbReference>
<dbReference type="NCBIfam" id="NF009905">
    <property type="entry name" value="PRK13368.1"/>
    <property type="match status" value="1"/>
</dbReference>
<dbReference type="PANTHER" id="PTHR42866">
    <property type="entry name" value="3-DEOXY-MANNO-OCTULOSONATE CYTIDYLYLTRANSFERASE"/>
    <property type="match status" value="1"/>
</dbReference>
<dbReference type="PANTHER" id="PTHR42866:SF2">
    <property type="entry name" value="3-DEOXY-MANNO-OCTULOSONATE CYTIDYLYLTRANSFERASE, MITOCHONDRIAL"/>
    <property type="match status" value="1"/>
</dbReference>
<dbReference type="Pfam" id="PF02348">
    <property type="entry name" value="CTP_transf_3"/>
    <property type="match status" value="1"/>
</dbReference>
<dbReference type="SUPFAM" id="SSF53448">
    <property type="entry name" value="Nucleotide-diphospho-sugar transferases"/>
    <property type="match status" value="1"/>
</dbReference>
<feature type="chain" id="PRO_1000091890" description="3-deoxy-manno-octulosonate cytidylyltransferase">
    <location>
        <begin position="1"/>
        <end position="254"/>
    </location>
</feature>
<proteinExistence type="inferred from homology"/>
<reference key="1">
    <citation type="journal article" date="2005" name="Nat. Biotechnol.">
        <title>Complete genome sequence of the plant commensal Pseudomonas fluorescens Pf-5.</title>
        <authorList>
            <person name="Paulsen I.T."/>
            <person name="Press C.M."/>
            <person name="Ravel J."/>
            <person name="Kobayashi D.Y."/>
            <person name="Myers G.S.A."/>
            <person name="Mavrodi D.V."/>
            <person name="DeBoy R.T."/>
            <person name="Seshadri R."/>
            <person name="Ren Q."/>
            <person name="Madupu R."/>
            <person name="Dodson R.J."/>
            <person name="Durkin A.S."/>
            <person name="Brinkac L.M."/>
            <person name="Daugherty S.C."/>
            <person name="Sullivan S.A."/>
            <person name="Rosovitz M.J."/>
            <person name="Gwinn M.L."/>
            <person name="Zhou L."/>
            <person name="Schneider D.J."/>
            <person name="Cartinhour S.W."/>
            <person name="Nelson W.C."/>
            <person name="Weidman J."/>
            <person name="Watkins K."/>
            <person name="Tran K."/>
            <person name="Khouri H."/>
            <person name="Pierson E.A."/>
            <person name="Pierson L.S. III"/>
            <person name="Thomashow L.S."/>
            <person name="Loper J.E."/>
        </authorList>
    </citation>
    <scope>NUCLEOTIDE SEQUENCE [LARGE SCALE GENOMIC DNA]</scope>
    <source>
        <strain>ATCC BAA-477 / NRRL B-23932 / Pf-5</strain>
    </source>
</reference>
<accession>Q4KFT3</accession>
<sequence>MSSAFTVVIPARYASTRLPGKPLQLIAGKPMIQWVWEQARKSSAERVVVATDDQRIVEACQGFGAEALLTREDHNSGTDRLAEVAAQLGLAADAIVVNVQGDEPLIPPSVIDQVAANLAAHTEARMATLAEPIEDVQTLFNPNVVKVVSDLNGLALTFSRATLPWARDAFAQSREQLPEGVPYRRHIGIYAYRAGFLHDFVSWGPCWLENTESLEQLRALWHGVRIHVADALEAPPTGVDTAEDLERVRRLLEA</sequence>
<name>KDSB_PSEF5</name>
<comment type="function">
    <text evidence="1">Activates KDO (a required 8-carbon sugar) for incorporation into bacterial lipopolysaccharide in Gram-negative bacteria.</text>
</comment>
<comment type="catalytic activity">
    <reaction evidence="1">
        <text>3-deoxy-alpha-D-manno-oct-2-ulosonate + CTP = CMP-3-deoxy-beta-D-manno-octulosonate + diphosphate</text>
        <dbReference type="Rhea" id="RHEA:23448"/>
        <dbReference type="ChEBI" id="CHEBI:33019"/>
        <dbReference type="ChEBI" id="CHEBI:37563"/>
        <dbReference type="ChEBI" id="CHEBI:85986"/>
        <dbReference type="ChEBI" id="CHEBI:85987"/>
        <dbReference type="EC" id="2.7.7.38"/>
    </reaction>
</comment>
<comment type="pathway">
    <text evidence="1">Nucleotide-sugar biosynthesis; CMP-3-deoxy-D-manno-octulosonate biosynthesis; CMP-3-deoxy-D-manno-octulosonate from 3-deoxy-D-manno-octulosonate and CTP: step 1/1.</text>
</comment>
<comment type="pathway">
    <text evidence="1">Bacterial outer membrane biogenesis; lipopolysaccharide biosynthesis.</text>
</comment>
<comment type="subcellular location">
    <subcellularLocation>
        <location evidence="1">Cytoplasm</location>
    </subcellularLocation>
</comment>
<comment type="similarity">
    <text evidence="1">Belongs to the KdsB family.</text>
</comment>
<organism>
    <name type="scientific">Pseudomonas fluorescens (strain ATCC BAA-477 / NRRL B-23932 / Pf-5)</name>
    <dbReference type="NCBI Taxonomy" id="220664"/>
    <lineage>
        <taxon>Bacteria</taxon>
        <taxon>Pseudomonadati</taxon>
        <taxon>Pseudomonadota</taxon>
        <taxon>Gammaproteobacteria</taxon>
        <taxon>Pseudomonadales</taxon>
        <taxon>Pseudomonadaceae</taxon>
        <taxon>Pseudomonas</taxon>
    </lineage>
</organism>